<gene>
    <name evidence="1" type="primary">tolB</name>
    <name type="ordered locus">BceJ2315_31480</name>
    <name type="ORF">BCAL3203</name>
</gene>
<sequence length="431" mass="45783">MSLMTKLGFRALVASCLITAGSAANAQVNVLITGVGSTQFPIATANFTNEANLPQQVTSIVRADLARSGKFTNIDAGSTPVPETASVDLGAWKAKGANAFVAGSVNREANGQYKVNFILYDTVKQQSLGGLSLTATDTTLRTAGHKIADYIYQKLLGVRGVFATRLSYVIKTGNRYQLQISDSDGQNARIALSSTEPIISPAWSPSGTKVAYVSFERKKPIVYIHDLPTGRRYMVSDQKGNNSAPAWSPDSNTLAVALSLTGNTQIYTVNANGGGLRRLTQSSSIDTEPFYSPDGRWIYFTSDRGGAPQIYRMPAQGESAGAAQRVTFTGSYNTSPRVSPDGKLLAYISRTGGGFKLYVQDLQTGAANAITNTNRDESPSFAANGQYLLYATQSGGRNVLAAVPSDGSAPPQILSVQGGSVREPSWGPFMQ</sequence>
<proteinExistence type="inferred from homology"/>
<keyword id="KW-0131">Cell cycle</keyword>
<keyword id="KW-0132">Cell division</keyword>
<keyword id="KW-0574">Periplasm</keyword>
<keyword id="KW-0732">Signal</keyword>
<feature type="signal peptide" evidence="1">
    <location>
        <begin position="1"/>
        <end position="26"/>
    </location>
</feature>
<feature type="chain" id="PRO_5000387183" description="Tol-Pal system protein TolB" evidence="1">
    <location>
        <begin position="27"/>
        <end position="431"/>
    </location>
</feature>
<feature type="region of interest" description="Disordered" evidence="2">
    <location>
        <begin position="406"/>
        <end position="431"/>
    </location>
</feature>
<reference key="1">
    <citation type="journal article" date="2009" name="J. Bacteriol.">
        <title>The genome of Burkholderia cenocepacia J2315, an epidemic pathogen of cystic fibrosis patients.</title>
        <authorList>
            <person name="Holden M.T."/>
            <person name="Seth-Smith H.M."/>
            <person name="Crossman L.C."/>
            <person name="Sebaihia M."/>
            <person name="Bentley S.D."/>
            <person name="Cerdeno-Tarraga A.M."/>
            <person name="Thomson N.R."/>
            <person name="Bason N."/>
            <person name="Quail M.A."/>
            <person name="Sharp S."/>
            <person name="Cherevach I."/>
            <person name="Churcher C."/>
            <person name="Goodhead I."/>
            <person name="Hauser H."/>
            <person name="Holroyd N."/>
            <person name="Mungall K."/>
            <person name="Scott P."/>
            <person name="Walker D."/>
            <person name="White B."/>
            <person name="Rose H."/>
            <person name="Iversen P."/>
            <person name="Mil-Homens D."/>
            <person name="Rocha E.P."/>
            <person name="Fialho A.M."/>
            <person name="Baldwin A."/>
            <person name="Dowson C."/>
            <person name="Barrell B.G."/>
            <person name="Govan J.R."/>
            <person name="Vandamme P."/>
            <person name="Hart C.A."/>
            <person name="Mahenthiralingam E."/>
            <person name="Parkhill J."/>
        </authorList>
    </citation>
    <scope>NUCLEOTIDE SEQUENCE [LARGE SCALE GENOMIC DNA]</scope>
    <source>
        <strain>ATCC BAA-245 / DSM 16553 / LMG 16656 / NCTC 13227 / J2315 / CF5610</strain>
    </source>
</reference>
<dbReference type="EMBL" id="AM747720">
    <property type="protein sequence ID" value="CAR53527.1"/>
    <property type="molecule type" value="Genomic_DNA"/>
</dbReference>
<dbReference type="RefSeq" id="WP_012492927.1">
    <property type="nucleotide sequence ID" value="NC_011000.1"/>
</dbReference>
<dbReference type="SMR" id="B4EDC0"/>
<dbReference type="KEGG" id="bcj:BCAL3203"/>
<dbReference type="eggNOG" id="COG0823">
    <property type="taxonomic scope" value="Bacteria"/>
</dbReference>
<dbReference type="HOGENOM" id="CLU_047123_0_0_4"/>
<dbReference type="BioCyc" id="BCEN216591:G1G1V-3552-MONOMER"/>
<dbReference type="Proteomes" id="UP000001035">
    <property type="component" value="Chromosome 1"/>
</dbReference>
<dbReference type="GO" id="GO:0042597">
    <property type="term" value="C:periplasmic space"/>
    <property type="evidence" value="ECO:0007669"/>
    <property type="project" value="UniProtKB-SubCell"/>
</dbReference>
<dbReference type="GO" id="GO:0051301">
    <property type="term" value="P:cell division"/>
    <property type="evidence" value="ECO:0007669"/>
    <property type="project" value="UniProtKB-UniRule"/>
</dbReference>
<dbReference type="GO" id="GO:0017038">
    <property type="term" value="P:protein import"/>
    <property type="evidence" value="ECO:0007669"/>
    <property type="project" value="InterPro"/>
</dbReference>
<dbReference type="Gene3D" id="2.120.10.30">
    <property type="entry name" value="TolB, C-terminal domain"/>
    <property type="match status" value="1"/>
</dbReference>
<dbReference type="Gene3D" id="3.40.50.10070">
    <property type="entry name" value="TolB, N-terminal domain"/>
    <property type="match status" value="1"/>
</dbReference>
<dbReference type="HAMAP" id="MF_00671">
    <property type="entry name" value="TolB"/>
    <property type="match status" value="1"/>
</dbReference>
<dbReference type="InterPro" id="IPR011042">
    <property type="entry name" value="6-blade_b-propeller_TolB-like"/>
</dbReference>
<dbReference type="InterPro" id="IPR011659">
    <property type="entry name" value="PD40"/>
</dbReference>
<dbReference type="InterPro" id="IPR014167">
    <property type="entry name" value="Tol-Pal_TolB"/>
</dbReference>
<dbReference type="InterPro" id="IPR007195">
    <property type="entry name" value="TolB_N"/>
</dbReference>
<dbReference type="NCBIfam" id="TIGR02800">
    <property type="entry name" value="propeller_TolB"/>
    <property type="match status" value="1"/>
</dbReference>
<dbReference type="PANTHER" id="PTHR36842:SF1">
    <property type="entry name" value="PROTEIN TOLB"/>
    <property type="match status" value="1"/>
</dbReference>
<dbReference type="PANTHER" id="PTHR36842">
    <property type="entry name" value="PROTEIN TOLB HOMOLOG"/>
    <property type="match status" value="1"/>
</dbReference>
<dbReference type="Pfam" id="PF07676">
    <property type="entry name" value="PD40"/>
    <property type="match status" value="5"/>
</dbReference>
<dbReference type="Pfam" id="PF04052">
    <property type="entry name" value="TolB_N"/>
    <property type="match status" value="1"/>
</dbReference>
<dbReference type="SUPFAM" id="SSF52964">
    <property type="entry name" value="TolB, N-terminal domain"/>
    <property type="match status" value="1"/>
</dbReference>
<dbReference type="SUPFAM" id="SSF69304">
    <property type="entry name" value="Tricorn protease N-terminal domain"/>
    <property type="match status" value="1"/>
</dbReference>
<protein>
    <recommendedName>
        <fullName evidence="1">Tol-Pal system protein TolB</fullName>
    </recommendedName>
</protein>
<comment type="function">
    <text evidence="1">Part of the Tol-Pal system, which plays a role in outer membrane invagination during cell division and is important for maintaining outer membrane integrity.</text>
</comment>
<comment type="subunit">
    <text evidence="1">The Tol-Pal system is composed of five core proteins: the inner membrane proteins TolA, TolQ and TolR, the periplasmic protein TolB and the outer membrane protein Pal. They form a network linking the inner and outer membranes and the peptidoglycan layer.</text>
</comment>
<comment type="subcellular location">
    <subcellularLocation>
        <location evidence="1">Periplasm</location>
    </subcellularLocation>
</comment>
<comment type="similarity">
    <text evidence="1">Belongs to the TolB family.</text>
</comment>
<name>TOLB_BURCJ</name>
<organism>
    <name type="scientific">Burkholderia cenocepacia (strain ATCC BAA-245 / DSM 16553 / LMG 16656 / NCTC 13227 / J2315 / CF5610)</name>
    <name type="common">Burkholderia cepacia (strain J2315)</name>
    <dbReference type="NCBI Taxonomy" id="216591"/>
    <lineage>
        <taxon>Bacteria</taxon>
        <taxon>Pseudomonadati</taxon>
        <taxon>Pseudomonadota</taxon>
        <taxon>Betaproteobacteria</taxon>
        <taxon>Burkholderiales</taxon>
        <taxon>Burkholderiaceae</taxon>
        <taxon>Burkholderia</taxon>
        <taxon>Burkholderia cepacia complex</taxon>
    </lineage>
</organism>
<evidence type="ECO:0000255" key="1">
    <source>
        <dbReference type="HAMAP-Rule" id="MF_00671"/>
    </source>
</evidence>
<evidence type="ECO:0000256" key="2">
    <source>
        <dbReference type="SAM" id="MobiDB-lite"/>
    </source>
</evidence>
<accession>B4EDC0</accession>